<accession>P35512</accession>
<gene>
    <name type="primary">PAL</name>
</gene>
<sequence>VDEQHNQDVNSLGLISSRKTAEAVDILKLMSSTFLVALCQSIDLRHLEENLRNTVKNTVSQVAKRTLTTGVNGELHPSRFCEKDLLKVVDREYVFAYIDDPCSATYPLMQKLREVLIEHALTNGESEKNASTSIFQKIGAFEEELKALLPKEVESARSAIEGGNAAVPNRIAECRSYPLYKFVREELGGEYLTGEKVRSPGEECDKVFQAICQGKIIDPILGCLEGWNGAPLPIC</sequence>
<reference key="1">
    <citation type="submission" date="1992-08" db="EMBL/GenBank/DDBJ databases">
        <authorList>
            <person name="Davies K.M."/>
            <person name="Bradley J.M."/>
        </authorList>
    </citation>
    <scope>NUCLEOTIDE SEQUENCE [MRNA]</scope>
    <source>
        <tissue>Leaf</tissue>
    </source>
</reference>
<organism>
    <name type="scientific">Malus domestica</name>
    <name type="common">Apple</name>
    <name type="synonym">Pyrus malus</name>
    <dbReference type="NCBI Taxonomy" id="3750"/>
    <lineage>
        <taxon>Eukaryota</taxon>
        <taxon>Viridiplantae</taxon>
        <taxon>Streptophyta</taxon>
        <taxon>Embryophyta</taxon>
        <taxon>Tracheophyta</taxon>
        <taxon>Spermatophyta</taxon>
        <taxon>Magnoliopsida</taxon>
        <taxon>eudicotyledons</taxon>
        <taxon>Gunneridae</taxon>
        <taxon>Pentapetalae</taxon>
        <taxon>rosids</taxon>
        <taxon>fabids</taxon>
        <taxon>Rosales</taxon>
        <taxon>Rosaceae</taxon>
        <taxon>Amygdaloideae</taxon>
        <taxon>Maleae</taxon>
        <taxon>Malus</taxon>
    </lineage>
</organism>
<comment type="function">
    <text evidence="2">This is a key enzyme of plant metabolism catalyzing the first reaction in the biosynthesis from L-phenylalanine of a wide variety of natural products based on the phenylpropane skeleton.</text>
</comment>
<comment type="catalytic activity">
    <reaction evidence="2">
        <text>L-phenylalanine = (E)-cinnamate + NH4(+)</text>
        <dbReference type="Rhea" id="RHEA:21384"/>
        <dbReference type="ChEBI" id="CHEBI:15669"/>
        <dbReference type="ChEBI" id="CHEBI:28938"/>
        <dbReference type="ChEBI" id="CHEBI:58095"/>
        <dbReference type="EC" id="4.3.1.24"/>
    </reaction>
</comment>
<comment type="pathway">
    <text evidence="4">Phenylpropanoid metabolism; trans-cinnamate biosynthesis; trans-cinnamate from L-phenylalanine: step 1/1.</text>
</comment>
<comment type="subunit">
    <text evidence="2">Homotetramer.</text>
</comment>
<comment type="subcellular location">
    <subcellularLocation>
        <location evidence="4">Cytoplasm</location>
    </subcellularLocation>
</comment>
<comment type="PTM">
    <text evidence="3">Contains an active site 4-methylidene-imidazol-5-one (MIO), which is formed autocatalytically by cyclization and dehydration of residues Ala-Ser-Gly.</text>
</comment>
<comment type="similarity">
    <text evidence="4">Belongs to the PAL/histidase family.</text>
</comment>
<dbReference type="EC" id="4.3.1.24" evidence="2"/>
<dbReference type="EMBL" id="X68126">
    <property type="protein sequence ID" value="CAA48231.1"/>
    <property type="molecule type" value="mRNA"/>
</dbReference>
<dbReference type="PIR" id="S25538">
    <property type="entry name" value="S25538"/>
</dbReference>
<dbReference type="SMR" id="P35512"/>
<dbReference type="UniPathway" id="UPA00713">
    <property type="reaction ID" value="UER00725"/>
</dbReference>
<dbReference type="GO" id="GO:0005737">
    <property type="term" value="C:cytoplasm"/>
    <property type="evidence" value="ECO:0007669"/>
    <property type="project" value="UniProtKB-SubCell"/>
</dbReference>
<dbReference type="GO" id="GO:0045548">
    <property type="term" value="F:phenylalanine ammonia-lyase activity"/>
    <property type="evidence" value="ECO:0007669"/>
    <property type="project" value="UniProtKB-EC"/>
</dbReference>
<dbReference type="GO" id="GO:0009800">
    <property type="term" value="P:cinnamic acid biosynthetic process"/>
    <property type="evidence" value="ECO:0007669"/>
    <property type="project" value="UniProtKB-UniPathway"/>
</dbReference>
<dbReference type="GO" id="GO:0006559">
    <property type="term" value="P:L-phenylalanine catabolic process"/>
    <property type="evidence" value="ECO:0007669"/>
    <property type="project" value="UniProtKB-KW"/>
</dbReference>
<dbReference type="FunFam" id="1.10.274.20:FF:000001">
    <property type="entry name" value="Phenylalanine ammonia-lyase"/>
    <property type="match status" value="1"/>
</dbReference>
<dbReference type="Gene3D" id="1.10.274.20">
    <property type="entry name" value="Phenylalanine ammonia-lyase 1, domain 3"/>
    <property type="match status" value="1"/>
</dbReference>
<dbReference type="InterPro" id="IPR001106">
    <property type="entry name" value="Aromatic_Lyase"/>
</dbReference>
<dbReference type="InterPro" id="IPR008948">
    <property type="entry name" value="L-Aspartase-like"/>
</dbReference>
<dbReference type="InterPro" id="IPR023144">
    <property type="entry name" value="Phe_NH3-lyase_shielding_dom_sf"/>
</dbReference>
<dbReference type="PANTHER" id="PTHR10362">
    <property type="entry name" value="HISTIDINE AMMONIA-LYASE"/>
    <property type="match status" value="1"/>
</dbReference>
<dbReference type="Pfam" id="PF00221">
    <property type="entry name" value="Lyase_aromatic"/>
    <property type="match status" value="1"/>
</dbReference>
<dbReference type="SUPFAM" id="SSF48557">
    <property type="entry name" value="L-aspartase-like"/>
    <property type="match status" value="1"/>
</dbReference>
<evidence type="ECO:0000250" key="1">
    <source>
        <dbReference type="UniProtKB" id="P11544"/>
    </source>
</evidence>
<evidence type="ECO:0000250" key="2">
    <source>
        <dbReference type="UniProtKB" id="P24481"/>
    </source>
</evidence>
<evidence type="ECO:0000250" key="3">
    <source>
        <dbReference type="UniProtKB" id="Q68G84"/>
    </source>
</evidence>
<evidence type="ECO:0000305" key="4"/>
<name>PALY_MALDO</name>
<keyword id="KW-0963">Cytoplasm</keyword>
<keyword id="KW-0456">Lyase</keyword>
<keyword id="KW-0585">Phenylalanine catabolism</keyword>
<keyword id="KW-0587">Phenylpropanoid metabolism</keyword>
<feature type="chain" id="PRO_0000215399" description="Phenylalanine ammonia-lyase">
    <location>
        <begin position="1" status="less than"/>
        <end position="235"/>
    </location>
</feature>
<feature type="binding site" evidence="1">
    <location>
        <position position="3"/>
    </location>
    <ligand>
        <name>(E)-cinnamate</name>
        <dbReference type="ChEBI" id="CHEBI:15669"/>
    </ligand>
</feature>
<feature type="binding site" evidence="3">
    <location>
        <position position="6"/>
    </location>
    <ligand>
        <name>(E)-cinnamate</name>
        <dbReference type="ChEBI" id="CHEBI:15669"/>
    </ligand>
</feature>
<feature type="non-terminal residue">
    <location>
        <position position="1"/>
    </location>
</feature>
<protein>
    <recommendedName>
        <fullName>Phenylalanine ammonia-lyase</fullName>
        <ecNumber evidence="2">4.3.1.24</ecNumber>
    </recommendedName>
</protein>
<proteinExistence type="evidence at transcript level"/>